<gene>
    <name evidence="3" type="primary">rfs-1</name>
    <name type="ORF">CBG16660</name>
</gene>
<comment type="function">
    <text evidence="1">Has a role in the homologous recombination repair (HRR) of genomic DNA during meiosis. Required for rad-51 recruitment onto ssDNA gaps generated at stalled replication fork barriers (By similarity).</text>
</comment>
<comment type="subunit">
    <text evidence="1">Interacts with brc-2 and rad-51.</text>
</comment>
<comment type="subcellular location">
    <subcellularLocation>
        <location evidence="2">Nucleus</location>
    </subcellularLocation>
</comment>
<dbReference type="EMBL" id="HE600949">
    <property type="protein sequence ID" value="CAP34571.1"/>
    <property type="molecule type" value="Genomic_DNA"/>
</dbReference>
<dbReference type="SMR" id="A8XP91"/>
<dbReference type="FunCoup" id="A8XP91">
    <property type="interactions" value="1"/>
</dbReference>
<dbReference type="STRING" id="6238.A8XP91"/>
<dbReference type="EnsemblMetazoa" id="CBG16660.1">
    <property type="protein sequence ID" value="CBG16660.1"/>
    <property type="gene ID" value="WBGene00036540"/>
</dbReference>
<dbReference type="KEGG" id="cbr:CBG_16660"/>
<dbReference type="CTD" id="8583948"/>
<dbReference type="WormBase" id="CBG16660">
    <property type="protein sequence ID" value="CBP18797"/>
    <property type="gene ID" value="WBGene00036540"/>
    <property type="gene designation" value="Cbr-rfs-1"/>
</dbReference>
<dbReference type="eggNOG" id="ENOG502T0IA">
    <property type="taxonomic scope" value="Eukaryota"/>
</dbReference>
<dbReference type="HOGENOM" id="CLU_987747_0_0_1"/>
<dbReference type="InParanoid" id="A8XP91"/>
<dbReference type="OMA" id="NHITHWR"/>
<dbReference type="Proteomes" id="UP000008549">
    <property type="component" value="Unassembled WGS sequence"/>
</dbReference>
<dbReference type="GO" id="GO:0005815">
    <property type="term" value="C:microtubule organizing center"/>
    <property type="evidence" value="ECO:0000318"/>
    <property type="project" value="GO_Central"/>
</dbReference>
<dbReference type="GO" id="GO:0033063">
    <property type="term" value="C:Rad51B-Rad51C-Rad51D-XRCC2 complex"/>
    <property type="evidence" value="ECO:0000318"/>
    <property type="project" value="GO_Central"/>
</dbReference>
<dbReference type="GO" id="GO:0005657">
    <property type="term" value="C:replication fork"/>
    <property type="evidence" value="ECO:0000318"/>
    <property type="project" value="GO_Central"/>
</dbReference>
<dbReference type="GO" id="GO:0005524">
    <property type="term" value="F:ATP binding"/>
    <property type="evidence" value="ECO:0007669"/>
    <property type="project" value="InterPro"/>
</dbReference>
<dbReference type="GO" id="GO:0008094">
    <property type="term" value="F:ATP-dependent activity, acting on DNA"/>
    <property type="evidence" value="ECO:0000318"/>
    <property type="project" value="GO_Central"/>
</dbReference>
<dbReference type="GO" id="GO:0140664">
    <property type="term" value="F:ATP-dependent DNA damage sensor activity"/>
    <property type="evidence" value="ECO:0007669"/>
    <property type="project" value="InterPro"/>
</dbReference>
<dbReference type="GO" id="GO:0051117">
    <property type="term" value="F:ATPase binding"/>
    <property type="evidence" value="ECO:0007669"/>
    <property type="project" value="EnsemblMetazoa"/>
</dbReference>
<dbReference type="GO" id="GO:0003697">
    <property type="term" value="F:single-stranded DNA binding"/>
    <property type="evidence" value="ECO:0000318"/>
    <property type="project" value="GO_Central"/>
</dbReference>
<dbReference type="GO" id="GO:0000730">
    <property type="term" value="P:DNA recombinase assembly"/>
    <property type="evidence" value="ECO:0007669"/>
    <property type="project" value="EnsemblMetazoa"/>
</dbReference>
<dbReference type="GO" id="GO:0042148">
    <property type="term" value="P:DNA strand invasion"/>
    <property type="evidence" value="ECO:0000318"/>
    <property type="project" value="GO_Central"/>
</dbReference>
<dbReference type="GO" id="GO:0000724">
    <property type="term" value="P:double-strand break repair via homologous recombination"/>
    <property type="evidence" value="ECO:0000318"/>
    <property type="project" value="GO_Central"/>
</dbReference>
<dbReference type="GO" id="GO:0007131">
    <property type="term" value="P:reciprocal meiotic recombination"/>
    <property type="evidence" value="ECO:0000318"/>
    <property type="project" value="GO_Central"/>
</dbReference>
<dbReference type="GO" id="GO:0000712">
    <property type="term" value="P:resolution of meiotic recombination intermediates"/>
    <property type="evidence" value="ECO:0007669"/>
    <property type="project" value="EnsemblMetazoa"/>
</dbReference>
<dbReference type="GO" id="GO:0000723">
    <property type="term" value="P:telomere maintenance"/>
    <property type="evidence" value="ECO:0000318"/>
    <property type="project" value="GO_Central"/>
</dbReference>
<dbReference type="Gene3D" id="3.40.50.300">
    <property type="entry name" value="P-loop containing nucleotide triphosphate hydrolases"/>
    <property type="match status" value="1"/>
</dbReference>
<dbReference type="InterPro" id="IPR051988">
    <property type="entry name" value="HRR_RAD51_Paralog"/>
</dbReference>
<dbReference type="InterPro" id="IPR027417">
    <property type="entry name" value="P-loop_NTPase"/>
</dbReference>
<dbReference type="InterPro" id="IPR020588">
    <property type="entry name" value="RecA_ATP-bd"/>
</dbReference>
<dbReference type="PANTHER" id="PTHR46457">
    <property type="entry name" value="DNA REPAIR PROTEIN RAD51 HOMOLOG 4"/>
    <property type="match status" value="1"/>
</dbReference>
<dbReference type="PANTHER" id="PTHR46457:SF1">
    <property type="entry name" value="DNA REPAIR PROTEIN RAD51 HOMOLOG 4"/>
    <property type="match status" value="1"/>
</dbReference>
<dbReference type="SUPFAM" id="SSF52540">
    <property type="entry name" value="P-loop containing nucleoside triphosphate hydrolases"/>
    <property type="match status" value="1"/>
</dbReference>
<dbReference type="PROSITE" id="PS50162">
    <property type="entry name" value="RECA_2"/>
    <property type="match status" value="1"/>
</dbReference>
<sequence length="244" mass="27424">MDSSKITFEYETAYELLVRLGADGLFLHTSLPTLNKVLELVPGKCYELDGDIGSGKTQLCYSLAAKLLLTKKTAKIGWISAVPLRTDHLSQHISSTDADETSHLLDRIVCKRVEMVSELRDSLNALCETINMQLVIVENIDAILHDTAYDREMGRNVQIDISERLRKLTRSGITVMVTNHITYWRGYPAPALGNFWASQIENRFFVERRSEESNVRSVSTMRGGNEKTIRVDFEISDGGLKAVV</sequence>
<feature type="chain" id="PRO_0000386433" description="RAD51-like protein 1">
    <location>
        <begin position="1"/>
        <end position="244"/>
    </location>
</feature>
<accession>A8XP91</accession>
<evidence type="ECO:0000250" key="1">
    <source>
        <dbReference type="UniProtKB" id="P34348"/>
    </source>
</evidence>
<evidence type="ECO:0000305" key="2"/>
<evidence type="ECO:0000312" key="3">
    <source>
        <dbReference type="EMBL" id="CAP34571.1"/>
    </source>
</evidence>
<keyword id="KW-0233">DNA recombination</keyword>
<keyword id="KW-0238">DNA-binding</keyword>
<keyword id="KW-0469">Meiosis</keyword>
<keyword id="KW-0539">Nucleus</keyword>
<keyword id="KW-1185">Reference proteome</keyword>
<organism>
    <name type="scientific">Caenorhabditis briggsae</name>
    <dbReference type="NCBI Taxonomy" id="6238"/>
    <lineage>
        <taxon>Eukaryota</taxon>
        <taxon>Metazoa</taxon>
        <taxon>Ecdysozoa</taxon>
        <taxon>Nematoda</taxon>
        <taxon>Chromadorea</taxon>
        <taxon>Rhabditida</taxon>
        <taxon>Rhabditina</taxon>
        <taxon>Rhabditomorpha</taxon>
        <taxon>Rhabditoidea</taxon>
        <taxon>Rhabditidae</taxon>
        <taxon>Peloderinae</taxon>
        <taxon>Caenorhabditis</taxon>
    </lineage>
</organism>
<reference evidence="3" key="1">
    <citation type="journal article" date="2003" name="PLoS Biol.">
        <title>The genome sequence of Caenorhabditis briggsae: a platform for comparative genomics.</title>
        <authorList>
            <person name="Stein L.D."/>
            <person name="Bao Z."/>
            <person name="Blasiar D."/>
            <person name="Blumenthal T."/>
            <person name="Brent M.R."/>
            <person name="Chen N."/>
            <person name="Chinwalla A."/>
            <person name="Clarke L."/>
            <person name="Clee C."/>
            <person name="Coghlan A."/>
            <person name="Coulson A."/>
            <person name="D'Eustachio P."/>
            <person name="Fitch D.H.A."/>
            <person name="Fulton L.A."/>
            <person name="Fulton R.E."/>
            <person name="Griffiths-Jones S."/>
            <person name="Harris T.W."/>
            <person name="Hillier L.W."/>
            <person name="Kamath R."/>
            <person name="Kuwabara P.E."/>
            <person name="Mardis E.R."/>
            <person name="Marra M.A."/>
            <person name="Miner T.L."/>
            <person name="Minx P."/>
            <person name="Mullikin J.C."/>
            <person name="Plumb R.W."/>
            <person name="Rogers J."/>
            <person name="Schein J.E."/>
            <person name="Sohrmann M."/>
            <person name="Spieth J."/>
            <person name="Stajich J.E."/>
            <person name="Wei C."/>
            <person name="Willey D."/>
            <person name="Wilson R.K."/>
            <person name="Durbin R.M."/>
            <person name="Waterston R.H."/>
        </authorList>
    </citation>
    <scope>NUCLEOTIDE SEQUENCE [LARGE SCALE GENOMIC DNA]</scope>
    <source>
        <strain evidence="3">AF16</strain>
    </source>
</reference>
<proteinExistence type="inferred from homology"/>
<protein>
    <recommendedName>
        <fullName evidence="1">RAD51-like protein 1</fullName>
    </recommendedName>
</protein>
<name>RFS1_CAEBR</name>